<name>HYCE_ECOLI</name>
<proteinExistence type="evidence at protein level"/>
<gene>
    <name type="primary">hycE</name>
    <name type="synonym">hevE</name>
    <name type="ordered locus">b2721</name>
    <name type="ordered locus">JW2691</name>
</gene>
<reference key="1">
    <citation type="journal article" date="1990" name="Mol. Microbiol.">
        <title>Nucleotide sequence and expression of an operon in Escherichia coli coding for formate hydrogenlyase components.</title>
        <authorList>
            <person name="Boehm R."/>
            <person name="Sauter M."/>
            <person name="Boeck A."/>
        </authorList>
    </citation>
    <scope>NUCLEOTIDE SEQUENCE [GENOMIC DNA]</scope>
    <source>
        <strain>K12 / MC4100 / ATCC 35695 / DSM 6574</strain>
    </source>
</reference>
<reference key="2">
    <citation type="journal article" date="1997" name="Science">
        <title>The complete genome sequence of Escherichia coli K-12.</title>
        <authorList>
            <person name="Blattner F.R."/>
            <person name="Plunkett G. III"/>
            <person name="Bloch C.A."/>
            <person name="Perna N.T."/>
            <person name="Burland V."/>
            <person name="Riley M."/>
            <person name="Collado-Vides J."/>
            <person name="Glasner J.D."/>
            <person name="Rode C.K."/>
            <person name="Mayhew G.F."/>
            <person name="Gregor J."/>
            <person name="Davis N.W."/>
            <person name="Kirkpatrick H.A."/>
            <person name="Goeden M.A."/>
            <person name="Rose D.J."/>
            <person name="Mau B."/>
            <person name="Shao Y."/>
        </authorList>
    </citation>
    <scope>NUCLEOTIDE SEQUENCE [LARGE SCALE GENOMIC DNA]</scope>
    <source>
        <strain>K12 / MG1655 / ATCC 47076</strain>
    </source>
</reference>
<reference key="3">
    <citation type="journal article" date="2006" name="Mol. Syst. Biol.">
        <title>Highly accurate genome sequences of Escherichia coli K-12 strains MG1655 and W3110.</title>
        <authorList>
            <person name="Hayashi K."/>
            <person name="Morooka N."/>
            <person name="Yamamoto Y."/>
            <person name="Fujita K."/>
            <person name="Isono K."/>
            <person name="Choi S."/>
            <person name="Ohtsubo E."/>
            <person name="Baba T."/>
            <person name="Wanner B.L."/>
            <person name="Mori H."/>
            <person name="Horiuchi T."/>
        </authorList>
    </citation>
    <scope>NUCLEOTIDE SEQUENCE [LARGE SCALE GENOMIC DNA]</scope>
    <source>
        <strain>K12 / W3110 / ATCC 27325 / DSM 5911</strain>
    </source>
</reference>
<reference key="4">
    <citation type="journal article" date="1994" name="Eur. J. Biochem.">
        <title>Maturation of the large subunit (HYCE) of Escherichia coli hydrogenase 3 requires nickel incorporation followed by C-terminal processing at Arg537.</title>
        <authorList>
            <person name="Rossmann R."/>
            <person name="Sauter M."/>
            <person name="Lottspeich F."/>
            <person name="Boeck A."/>
        </authorList>
    </citation>
    <scope>PROTEOLYTIC PROCESSING</scope>
</reference>
<protein>
    <recommendedName>
        <fullName>Formate hydrogenlyase subunit 5</fullName>
        <shortName>FHL subunit 5</shortName>
    </recommendedName>
    <alternativeName>
        <fullName>Hydrogenase-3 component E</fullName>
    </alternativeName>
</protein>
<comment type="cofactor">
    <cofactor evidence="1">
        <name>[4Fe-4S] cluster</name>
        <dbReference type="ChEBI" id="CHEBI:49883"/>
    </cofactor>
    <text evidence="1">Binds 1 [4Fe-4S] cluster.</text>
</comment>
<comment type="cofactor">
    <cofactor evidence="1">
        <name>Ni(2+)</name>
        <dbReference type="ChEBI" id="CHEBI:49786"/>
    </cofactor>
</comment>
<comment type="subunit">
    <text>FHL comprises of a formate dehydrogenase, unidentified electron carriers and a hydrogenase (isoenzyme 3). In this non-energy conserving pathway molecular hydrogen and carbodioxide from formate are released.</text>
</comment>
<comment type="interaction">
    <interactant intactId="EBI-552702">
        <id>P16431</id>
    </interactant>
    <interactant intactId="EBI-6290024">
        <id>P0A700</id>
        <label>hypA</label>
    </interactant>
    <organismsDiffer>false</organismsDiffer>
    <experiments>14</experiments>
</comment>
<comment type="interaction">
    <interactant intactId="EBI-552702">
        <id>P16431</id>
    </interactant>
    <interactant intactId="EBI-369251">
        <id>P0A9K9</id>
        <label>slyD</label>
    </interactant>
    <organismsDiffer>false</organismsDiffer>
    <experiments>7</experiments>
</comment>
<comment type="similarity">
    <text evidence="1">Belongs to the complex I 49 kDa subunit family.</text>
</comment>
<organism>
    <name type="scientific">Escherichia coli (strain K12)</name>
    <dbReference type="NCBI Taxonomy" id="83333"/>
    <lineage>
        <taxon>Bacteria</taxon>
        <taxon>Pseudomonadati</taxon>
        <taxon>Pseudomonadota</taxon>
        <taxon>Gammaproteobacteria</taxon>
        <taxon>Enterobacterales</taxon>
        <taxon>Enterobacteriaceae</taxon>
        <taxon>Escherichia</taxon>
    </lineage>
</organism>
<keyword id="KW-0002">3D-structure</keyword>
<keyword id="KW-0004">4Fe-4S</keyword>
<keyword id="KW-0408">Iron</keyword>
<keyword id="KW-0411">Iron-sulfur</keyword>
<keyword id="KW-0479">Metal-binding</keyword>
<keyword id="KW-0520">NAD</keyword>
<keyword id="KW-0533">Nickel</keyword>
<keyword id="KW-0560">Oxidoreductase</keyword>
<keyword id="KW-1185">Reference proteome</keyword>
<feature type="chain" id="PRO_0000019985" description="Formate hydrogenlyase subunit 5">
    <location>
        <begin position="1"/>
        <end position="537"/>
    </location>
</feature>
<feature type="propeptide" id="PRO_0000019986">
    <location>
        <begin position="538"/>
        <end position="569"/>
    </location>
</feature>
<feature type="helix" evidence="2">
    <location>
        <begin position="8"/>
        <end position="17"/>
    </location>
</feature>
<feature type="turn" evidence="2">
    <location>
        <begin position="19"/>
        <end position="21"/>
    </location>
</feature>
<feature type="strand" evidence="2">
    <location>
        <begin position="22"/>
        <end position="29"/>
    </location>
</feature>
<feature type="strand" evidence="2">
    <location>
        <begin position="32"/>
        <end position="37"/>
    </location>
</feature>
<feature type="helix" evidence="2">
    <location>
        <begin position="39"/>
        <end position="41"/>
    </location>
</feature>
<feature type="helix" evidence="2">
    <location>
        <begin position="42"/>
        <end position="51"/>
    </location>
</feature>
<feature type="turn" evidence="3">
    <location>
        <begin position="52"/>
        <end position="54"/>
    </location>
</feature>
<feature type="strand" evidence="2">
    <location>
        <begin position="55"/>
        <end position="63"/>
    </location>
</feature>
<feature type="turn" evidence="2">
    <location>
        <begin position="66"/>
        <end position="68"/>
    </location>
</feature>
<feature type="strand" evidence="2">
    <location>
        <begin position="69"/>
        <end position="80"/>
    </location>
</feature>
<feature type="strand" evidence="2">
    <location>
        <begin position="86"/>
        <end position="98"/>
    </location>
</feature>
<feature type="strand" evidence="2">
    <location>
        <begin position="100"/>
        <end position="102"/>
    </location>
</feature>
<feature type="turn" evidence="2">
    <location>
        <begin position="105"/>
        <end position="107"/>
    </location>
</feature>
<feature type="helix" evidence="2">
    <location>
        <begin position="109"/>
        <end position="111"/>
    </location>
</feature>
<feature type="helix" evidence="2">
    <location>
        <begin position="114"/>
        <end position="121"/>
    </location>
</feature>
<feature type="strand" evidence="2">
    <location>
        <begin position="125"/>
        <end position="127"/>
    </location>
</feature>
<feature type="turn" evidence="2">
    <location>
        <begin position="150"/>
        <end position="152"/>
    </location>
</feature>
<feature type="strand" evidence="2">
    <location>
        <begin position="173"/>
        <end position="175"/>
    </location>
</feature>
<feature type="strand" evidence="2">
    <location>
        <begin position="179"/>
        <end position="184"/>
    </location>
</feature>
<feature type="turn" evidence="3">
    <location>
        <begin position="189"/>
        <end position="191"/>
    </location>
</feature>
<feature type="strand" evidence="2">
    <location>
        <begin position="196"/>
        <end position="212"/>
    </location>
</feature>
<feature type="helix" evidence="2">
    <location>
        <begin position="220"/>
        <end position="226"/>
    </location>
</feature>
<feature type="helix" evidence="2">
    <location>
        <begin position="230"/>
        <end position="237"/>
    </location>
</feature>
<feature type="turn" evidence="2">
    <location>
        <begin position="238"/>
        <end position="240"/>
    </location>
</feature>
<feature type="turn" evidence="2">
    <location>
        <begin position="242"/>
        <end position="244"/>
    </location>
</feature>
<feature type="helix" evidence="2">
    <location>
        <begin position="245"/>
        <end position="260"/>
    </location>
</feature>
<feature type="helix" evidence="2">
    <location>
        <begin position="266"/>
        <end position="294"/>
    </location>
</feature>
<feature type="helix" evidence="2">
    <location>
        <begin position="298"/>
        <end position="319"/>
    </location>
</feature>
<feature type="strand" evidence="2">
    <location>
        <begin position="320"/>
        <end position="323"/>
    </location>
</feature>
<feature type="strand" evidence="2">
    <location>
        <begin position="332"/>
        <end position="335"/>
    </location>
</feature>
<feature type="helix" evidence="2">
    <location>
        <begin position="339"/>
        <end position="364"/>
    </location>
</feature>
<feature type="helix" evidence="2">
    <location>
        <begin position="369"/>
        <end position="373"/>
    </location>
</feature>
<feature type="helix" evidence="2">
    <location>
        <begin position="381"/>
        <end position="386"/>
    </location>
</feature>
<feature type="helix" evidence="2">
    <location>
        <begin position="392"/>
        <end position="395"/>
    </location>
</feature>
<feature type="turn" evidence="2">
    <location>
        <begin position="396"/>
        <end position="398"/>
    </location>
</feature>
<feature type="helix" evidence="2">
    <location>
        <begin position="403"/>
        <end position="406"/>
    </location>
</feature>
<feature type="helix" evidence="2">
    <location>
        <begin position="412"/>
        <end position="414"/>
    </location>
</feature>
<feature type="helix" evidence="2">
    <location>
        <begin position="427"/>
        <end position="448"/>
    </location>
</feature>
<feature type="strand" evidence="2">
    <location>
        <begin position="469"/>
        <end position="476"/>
    </location>
</feature>
<feature type="strand" evidence="2">
    <location>
        <begin position="479"/>
        <end position="487"/>
    </location>
</feature>
<feature type="strand" evidence="2">
    <location>
        <begin position="489"/>
        <end position="491"/>
    </location>
</feature>
<feature type="strand" evidence="2">
    <location>
        <begin position="493"/>
        <end position="499"/>
    </location>
</feature>
<feature type="helix" evidence="2">
    <location>
        <begin position="501"/>
        <end position="505"/>
    </location>
</feature>
<feature type="helix" evidence="2">
    <location>
        <begin position="506"/>
        <end position="508"/>
    </location>
</feature>
<feature type="helix" evidence="2">
    <location>
        <begin position="509"/>
        <end position="513"/>
    </location>
</feature>
<feature type="turn" evidence="2">
    <location>
        <begin position="518"/>
        <end position="520"/>
    </location>
</feature>
<feature type="helix" evidence="2">
    <location>
        <begin position="521"/>
        <end position="528"/>
    </location>
</feature>
<feature type="helix" evidence="2">
    <location>
        <begin position="532"/>
        <end position="536"/>
    </location>
</feature>
<sequence length="569" mass="64980">MSEEKLGQHYLAALNEAFPGVVLDHAWQTKDQLTVTVKVNYLPEVVEFLYYKQGGWLSVLFGNDERKLNGHYAVYYVLSMEKGTKCWITVRVEVDANKPEYPSVTPRVPAAVWGEREVRDMYGLIPVGLPDERRLVLPDDWPDELYPLRKDSMDYRQRPAPTTDAETYEFINELGDKKNNVVPIGPLHVTSDEPGHFRLFVDGENIIDADYRLFYVHRGMEKLAETRMGYNEVTFLSDRVCGICGFAHSTAYTTSVENAMGIQVPERAQMIRAILLEVERLHSHLLNLGLACHFTGFDSGFMQFFRVRETSMKMAEILTGARKTYGLNLIGGIRRDLLKDDMIQTRQLAQQMRREVQELVDVLLSTPNMEQRTVGIGRLDPEIARDFSNVGPMVRASGHARDTRADHPFVGYGLLPMEVHSEQGCDVISRLKVRINEVYTALNMIDYGLDNLPGGPLMVEGFTYIPHRFALGFAEAPRGDDIHWSMTGDNQKLYRWRCRAATYANWPTLRYMLRGNTVSDAPLIIGSLDPCYSCTDRMTVVDVRKKKSKVVPYKELERYSIERKNSPLK</sequence>
<accession>P16431</accession>
<accession>Q2MAA8</accession>
<dbReference type="EMBL" id="X17506">
    <property type="protein sequence ID" value="CAA35550.1"/>
    <property type="molecule type" value="Genomic_DNA"/>
</dbReference>
<dbReference type="EMBL" id="U29579">
    <property type="protein sequence ID" value="AAA69231.1"/>
    <property type="molecule type" value="Genomic_DNA"/>
</dbReference>
<dbReference type="EMBL" id="U00096">
    <property type="protein sequence ID" value="AAC75763.1"/>
    <property type="molecule type" value="Genomic_DNA"/>
</dbReference>
<dbReference type="EMBL" id="AP009048">
    <property type="protein sequence ID" value="BAE76798.1"/>
    <property type="molecule type" value="Genomic_DNA"/>
</dbReference>
<dbReference type="PIR" id="S08623">
    <property type="entry name" value="S08623"/>
</dbReference>
<dbReference type="RefSeq" id="NP_417201.1">
    <property type="nucleotide sequence ID" value="NC_000913.3"/>
</dbReference>
<dbReference type="RefSeq" id="WP_001288122.1">
    <property type="nucleotide sequence ID" value="NZ_SSUR01000024.1"/>
</dbReference>
<dbReference type="PDB" id="7Z0S">
    <property type="method" value="EM"/>
    <property type="resolution" value="2.60 A"/>
    <property type="chains" value="E=1-569"/>
</dbReference>
<dbReference type="PDB" id="7Z0T">
    <property type="method" value="EM"/>
    <property type="resolution" value="3.40 A"/>
    <property type="chains" value="E=1-569"/>
</dbReference>
<dbReference type="PDBsum" id="7Z0S"/>
<dbReference type="PDBsum" id="7Z0T"/>
<dbReference type="EMDB" id="EMD-14429"/>
<dbReference type="EMDB" id="EMD-14430"/>
<dbReference type="SMR" id="P16431"/>
<dbReference type="BioGRID" id="4261447">
    <property type="interactions" value="17"/>
</dbReference>
<dbReference type="BioGRID" id="851718">
    <property type="interactions" value="2"/>
</dbReference>
<dbReference type="ComplexPortal" id="CPX-317">
    <property type="entry name" value="Formate hydrogenlyase-H/Hydrogenase-3 complex"/>
</dbReference>
<dbReference type="DIP" id="DIP-9975N"/>
<dbReference type="FunCoup" id="P16431">
    <property type="interactions" value="34"/>
</dbReference>
<dbReference type="IntAct" id="P16431">
    <property type="interactions" value="18"/>
</dbReference>
<dbReference type="MINT" id="P16431"/>
<dbReference type="STRING" id="511145.b2721"/>
<dbReference type="TCDB" id="3.D.1.9.2">
    <property type="family name" value="the h+ or na+-translocating nadh dehydrogenase (ndh) family"/>
</dbReference>
<dbReference type="PaxDb" id="511145-b2721"/>
<dbReference type="EnsemblBacteria" id="AAC75763">
    <property type="protein sequence ID" value="AAC75763"/>
    <property type="gene ID" value="b2721"/>
</dbReference>
<dbReference type="GeneID" id="947396"/>
<dbReference type="KEGG" id="ecj:JW2691"/>
<dbReference type="KEGG" id="eco:b2721"/>
<dbReference type="KEGG" id="ecoc:C3026_14970"/>
<dbReference type="PATRIC" id="fig|1411691.4.peg.4020"/>
<dbReference type="EchoBASE" id="EB0473"/>
<dbReference type="eggNOG" id="COG3261">
    <property type="taxonomic scope" value="Bacteria"/>
</dbReference>
<dbReference type="eggNOG" id="COG3262">
    <property type="taxonomic scope" value="Bacteria"/>
</dbReference>
<dbReference type="HOGENOM" id="CLU_015134_3_1_6"/>
<dbReference type="InParanoid" id="P16431"/>
<dbReference type="OMA" id="GGRMHYM"/>
<dbReference type="OrthoDB" id="9801496at2"/>
<dbReference type="PhylomeDB" id="P16431"/>
<dbReference type="BioCyc" id="EcoCyc:HYCELARGE-MONOMER"/>
<dbReference type="BioCyc" id="MetaCyc:HYCELARGE-MONOMER"/>
<dbReference type="PRO" id="PR:P16431"/>
<dbReference type="Proteomes" id="UP000000625">
    <property type="component" value="Chromosome"/>
</dbReference>
<dbReference type="GO" id="GO:0009326">
    <property type="term" value="C:formate dehydrogenase complex"/>
    <property type="evidence" value="ECO:0000353"/>
    <property type="project" value="ComplexPortal"/>
</dbReference>
<dbReference type="GO" id="GO:0051539">
    <property type="term" value="F:4 iron, 4 sulfur cluster binding"/>
    <property type="evidence" value="ECO:0007669"/>
    <property type="project" value="UniProtKB-KW"/>
</dbReference>
<dbReference type="GO" id="GO:0051287">
    <property type="term" value="F:NAD binding"/>
    <property type="evidence" value="ECO:0007669"/>
    <property type="project" value="InterPro"/>
</dbReference>
<dbReference type="GO" id="GO:0008137">
    <property type="term" value="F:NADH dehydrogenase (ubiquinone) activity"/>
    <property type="evidence" value="ECO:0007669"/>
    <property type="project" value="InterPro"/>
</dbReference>
<dbReference type="GO" id="GO:0016151">
    <property type="term" value="F:nickel cation binding"/>
    <property type="evidence" value="ECO:0000314"/>
    <property type="project" value="EcoCyc"/>
</dbReference>
<dbReference type="GO" id="GO:0048038">
    <property type="term" value="F:quinone binding"/>
    <property type="evidence" value="ECO:0007669"/>
    <property type="project" value="InterPro"/>
</dbReference>
<dbReference type="GO" id="GO:0019645">
    <property type="term" value="P:anaerobic electron transport chain"/>
    <property type="evidence" value="ECO:0000314"/>
    <property type="project" value="ComplexPortal"/>
</dbReference>
<dbReference type="GO" id="GO:0009061">
    <property type="term" value="P:anaerobic respiration"/>
    <property type="evidence" value="ECO:0000314"/>
    <property type="project" value="ComplexPortal"/>
</dbReference>
<dbReference type="GO" id="GO:0015944">
    <property type="term" value="P:formate oxidation"/>
    <property type="evidence" value="ECO:0000314"/>
    <property type="project" value="ComplexPortal"/>
</dbReference>
<dbReference type="GO" id="GO:0006007">
    <property type="term" value="P:glucose catabolic process"/>
    <property type="evidence" value="ECO:0000314"/>
    <property type="project" value="ComplexPortal"/>
</dbReference>
<dbReference type="FunFam" id="3.30.460.80:FF:000003">
    <property type="entry name" value="Formate hydrogenlyase subunit 5"/>
    <property type="match status" value="1"/>
</dbReference>
<dbReference type="FunFam" id="1.10.645.10:FF:000004">
    <property type="entry name" value="Hydrogenase 3, large subunit"/>
    <property type="match status" value="1"/>
</dbReference>
<dbReference type="Gene3D" id="1.10.645.10">
    <property type="entry name" value="Cytochrome-c3 Hydrogenase, chain B"/>
    <property type="match status" value="1"/>
</dbReference>
<dbReference type="Gene3D" id="3.30.460.80">
    <property type="entry name" value="NADH:ubiquinone oxidoreductase, 30kDa subunit"/>
    <property type="match status" value="1"/>
</dbReference>
<dbReference type="InterPro" id="IPR052197">
    <property type="entry name" value="ComplexI_49kDa-like"/>
</dbReference>
<dbReference type="InterPro" id="IPR001135">
    <property type="entry name" value="NADH_Q_OxRdtase_suD"/>
</dbReference>
<dbReference type="InterPro" id="IPR037232">
    <property type="entry name" value="NADH_quin_OxRdtase_su_C/D-like"/>
</dbReference>
<dbReference type="InterPro" id="IPR001268">
    <property type="entry name" value="NADH_UbQ_OxRdtase_30kDa_su"/>
</dbReference>
<dbReference type="InterPro" id="IPR014029">
    <property type="entry name" value="NADH_UbQ_OxRdtase_49kDa_CS"/>
</dbReference>
<dbReference type="InterPro" id="IPR001501">
    <property type="entry name" value="Ni-dep_hyd_lsu"/>
</dbReference>
<dbReference type="InterPro" id="IPR029014">
    <property type="entry name" value="NiFe-Hase_large"/>
</dbReference>
<dbReference type="PANTHER" id="PTHR43485:SF1">
    <property type="entry name" value="FORMATE HYDROGENLYASE SUBUNIT 5-RELATED"/>
    <property type="match status" value="1"/>
</dbReference>
<dbReference type="PANTHER" id="PTHR43485">
    <property type="entry name" value="HYDROGENASE-4 COMPONENT G"/>
    <property type="match status" value="1"/>
</dbReference>
<dbReference type="Pfam" id="PF00329">
    <property type="entry name" value="Complex1_30kDa"/>
    <property type="match status" value="1"/>
</dbReference>
<dbReference type="Pfam" id="PF00346">
    <property type="entry name" value="Complex1_49kDa"/>
    <property type="match status" value="2"/>
</dbReference>
<dbReference type="Pfam" id="PF00374">
    <property type="entry name" value="NiFeSe_Hases"/>
    <property type="match status" value="1"/>
</dbReference>
<dbReference type="SUPFAM" id="SSF56762">
    <property type="entry name" value="HydB/Nqo4-like"/>
    <property type="match status" value="1"/>
</dbReference>
<dbReference type="SUPFAM" id="SSF143243">
    <property type="entry name" value="Nqo5-like"/>
    <property type="match status" value="1"/>
</dbReference>
<dbReference type="PROSITE" id="PS00535">
    <property type="entry name" value="COMPLEX1_49K"/>
    <property type="match status" value="1"/>
</dbReference>
<evidence type="ECO:0000305" key="1"/>
<evidence type="ECO:0007829" key="2">
    <source>
        <dbReference type="PDB" id="7Z0S"/>
    </source>
</evidence>
<evidence type="ECO:0007829" key="3">
    <source>
        <dbReference type="PDB" id="7Z0T"/>
    </source>
</evidence>